<evidence type="ECO:0000250" key="1"/>
<evidence type="ECO:0000250" key="2">
    <source>
        <dbReference type="UniProtKB" id="P62714"/>
    </source>
</evidence>
<evidence type="ECO:0000250" key="3">
    <source>
        <dbReference type="UniProtKB" id="P62715"/>
    </source>
</evidence>
<evidence type="ECO:0000250" key="4">
    <source>
        <dbReference type="UniProtKB" id="Q0P594"/>
    </source>
</evidence>
<evidence type="ECO:0000305" key="5"/>
<name>PP2AB_PIG</name>
<protein>
    <recommendedName>
        <fullName>Serine/threonine-protein phosphatase 2A catalytic subunit beta isoform</fullName>
        <shortName>PP2A-beta</shortName>
        <ecNumber evidence="2">3.1.3.16</ecNumber>
    </recommendedName>
</protein>
<feature type="chain" id="PRO_0000058847" description="Serine/threonine-protein phosphatase 2A catalytic subunit beta isoform">
    <location>
        <begin position="1" status="less than"/>
        <end position="293"/>
    </location>
</feature>
<feature type="active site" description="Proton donor" evidence="1">
    <location>
        <position position="102"/>
    </location>
</feature>
<feature type="binding site" evidence="1">
    <location>
        <position position="41"/>
    </location>
    <ligand>
        <name>Mn(2+)</name>
        <dbReference type="ChEBI" id="CHEBI:29035"/>
        <label>1</label>
    </ligand>
</feature>
<feature type="binding site" evidence="1">
    <location>
        <position position="43"/>
    </location>
    <ligand>
        <name>Mn(2+)</name>
        <dbReference type="ChEBI" id="CHEBI:29035"/>
        <label>1</label>
    </ligand>
</feature>
<feature type="binding site" evidence="1">
    <location>
        <position position="69"/>
    </location>
    <ligand>
        <name>Mn(2+)</name>
        <dbReference type="ChEBI" id="CHEBI:29035"/>
        <label>1</label>
    </ligand>
</feature>
<feature type="binding site" evidence="1">
    <location>
        <position position="69"/>
    </location>
    <ligand>
        <name>Mn(2+)</name>
        <dbReference type="ChEBI" id="CHEBI:29035"/>
        <label>2</label>
    </ligand>
</feature>
<feature type="binding site" evidence="1">
    <location>
        <position position="101"/>
    </location>
    <ligand>
        <name>Mn(2+)</name>
        <dbReference type="ChEBI" id="CHEBI:29035"/>
        <label>2</label>
    </ligand>
</feature>
<feature type="binding site" evidence="1">
    <location>
        <position position="151"/>
    </location>
    <ligand>
        <name>Mn(2+)</name>
        <dbReference type="ChEBI" id="CHEBI:29035"/>
        <label>2</label>
    </ligand>
</feature>
<feature type="binding site" evidence="1">
    <location>
        <position position="225"/>
    </location>
    <ligand>
        <name>Mn(2+)</name>
        <dbReference type="ChEBI" id="CHEBI:29035"/>
        <label>2</label>
    </ligand>
</feature>
<feature type="modified residue" description="Phosphotyrosine" evidence="3">
    <location>
        <position position="291"/>
    </location>
</feature>
<feature type="modified residue" description="Leucine methyl ester" evidence="2">
    <location>
        <position position="293"/>
    </location>
</feature>
<feature type="non-terminal residue">
    <location>
        <position position="1"/>
    </location>
</feature>
<organism>
    <name type="scientific">Sus scrofa</name>
    <name type="common">Pig</name>
    <dbReference type="NCBI Taxonomy" id="9823"/>
    <lineage>
        <taxon>Eukaryota</taxon>
        <taxon>Metazoa</taxon>
        <taxon>Chordata</taxon>
        <taxon>Craniata</taxon>
        <taxon>Vertebrata</taxon>
        <taxon>Euteleostomi</taxon>
        <taxon>Mammalia</taxon>
        <taxon>Eutheria</taxon>
        <taxon>Laurasiatheria</taxon>
        <taxon>Artiodactyla</taxon>
        <taxon>Suina</taxon>
        <taxon>Suidae</taxon>
        <taxon>Sus</taxon>
    </lineage>
</organism>
<reference key="1">
    <citation type="journal article" date="1987" name="Biochemistry">
        <title>Molecular cloning of cDNAs encoding two isoforms of the catalytic subunit of protein phosphatase 2A.</title>
        <authorList>
            <person name="Stone S.R."/>
            <person name="Hofsteenge J."/>
            <person name="Hemmings B.A."/>
        </authorList>
    </citation>
    <scope>NUCLEOTIDE SEQUENCE [MRNA]</scope>
    <source>
        <tissue>Kidney</tissue>
    </source>
</reference>
<keyword id="KW-0137">Centromere</keyword>
<keyword id="KW-0158">Chromosome</keyword>
<keyword id="KW-0963">Cytoplasm</keyword>
<keyword id="KW-0206">Cytoskeleton</keyword>
<keyword id="KW-0378">Hydrolase</keyword>
<keyword id="KW-0464">Manganese</keyword>
<keyword id="KW-0479">Metal-binding</keyword>
<keyword id="KW-0488">Methylation</keyword>
<keyword id="KW-0539">Nucleus</keyword>
<keyword id="KW-0597">Phosphoprotein</keyword>
<keyword id="KW-0904">Protein phosphatase</keyword>
<keyword id="KW-1185">Reference proteome</keyword>
<keyword id="KW-0832">Ubl conjugation</keyword>
<dbReference type="EC" id="3.1.3.16" evidence="2"/>
<dbReference type="EMBL" id="M20193">
    <property type="protein sequence ID" value="AAA30982.1"/>
    <property type="molecule type" value="mRNA"/>
</dbReference>
<dbReference type="PIR" id="B27430">
    <property type="entry name" value="B27430"/>
</dbReference>
<dbReference type="SMR" id="P11493"/>
<dbReference type="FunCoup" id="P11493">
    <property type="interactions" value="144"/>
</dbReference>
<dbReference type="PaxDb" id="9823-ENSSSCP00000016788"/>
<dbReference type="PeptideAtlas" id="P11493"/>
<dbReference type="eggNOG" id="KOG0371">
    <property type="taxonomic scope" value="Eukaryota"/>
</dbReference>
<dbReference type="InParanoid" id="P11493"/>
<dbReference type="Proteomes" id="UP000008227">
    <property type="component" value="Unplaced"/>
</dbReference>
<dbReference type="Proteomes" id="UP000314985">
    <property type="component" value="Unplaced"/>
</dbReference>
<dbReference type="Proteomes" id="UP000694570">
    <property type="component" value="Unplaced"/>
</dbReference>
<dbReference type="Proteomes" id="UP000694571">
    <property type="component" value="Unplaced"/>
</dbReference>
<dbReference type="Proteomes" id="UP000694720">
    <property type="component" value="Unplaced"/>
</dbReference>
<dbReference type="Proteomes" id="UP000694722">
    <property type="component" value="Unplaced"/>
</dbReference>
<dbReference type="Proteomes" id="UP000694723">
    <property type="component" value="Unplaced"/>
</dbReference>
<dbReference type="Proteomes" id="UP000694724">
    <property type="component" value="Unplaced"/>
</dbReference>
<dbReference type="Proteomes" id="UP000694725">
    <property type="component" value="Unplaced"/>
</dbReference>
<dbReference type="Proteomes" id="UP000694726">
    <property type="component" value="Unplaced"/>
</dbReference>
<dbReference type="Proteomes" id="UP000694727">
    <property type="component" value="Unplaced"/>
</dbReference>
<dbReference type="Proteomes" id="UP000694728">
    <property type="component" value="Unplaced"/>
</dbReference>
<dbReference type="GO" id="GO:0000775">
    <property type="term" value="C:chromosome, centromeric region"/>
    <property type="evidence" value="ECO:0007669"/>
    <property type="project" value="UniProtKB-SubCell"/>
</dbReference>
<dbReference type="GO" id="GO:0005829">
    <property type="term" value="C:cytosol"/>
    <property type="evidence" value="ECO:0000318"/>
    <property type="project" value="GO_Central"/>
</dbReference>
<dbReference type="GO" id="GO:0090443">
    <property type="term" value="C:FAR/SIN/STRIPAK complex"/>
    <property type="evidence" value="ECO:0000250"/>
    <property type="project" value="UniProtKB"/>
</dbReference>
<dbReference type="GO" id="GO:0005634">
    <property type="term" value="C:nucleus"/>
    <property type="evidence" value="ECO:0007669"/>
    <property type="project" value="UniProtKB-SubCell"/>
</dbReference>
<dbReference type="GO" id="GO:0000922">
    <property type="term" value="C:spindle pole"/>
    <property type="evidence" value="ECO:0007669"/>
    <property type="project" value="UniProtKB-SubCell"/>
</dbReference>
<dbReference type="GO" id="GO:0046872">
    <property type="term" value="F:metal ion binding"/>
    <property type="evidence" value="ECO:0007669"/>
    <property type="project" value="UniProtKB-KW"/>
</dbReference>
<dbReference type="GO" id="GO:0004722">
    <property type="term" value="F:protein serine/threonine phosphatase activity"/>
    <property type="evidence" value="ECO:0000318"/>
    <property type="project" value="GO_Central"/>
</dbReference>
<dbReference type="GO" id="GO:0000278">
    <property type="term" value="P:mitotic cell cycle"/>
    <property type="evidence" value="ECO:0000318"/>
    <property type="project" value="GO_Central"/>
</dbReference>
<dbReference type="CDD" id="cd07415">
    <property type="entry name" value="MPP_PP2A_PP4_PP6"/>
    <property type="match status" value="1"/>
</dbReference>
<dbReference type="FunFam" id="3.60.21.10:FF:000003">
    <property type="entry name" value="Serine/threonine-protein phosphatase"/>
    <property type="match status" value="1"/>
</dbReference>
<dbReference type="Gene3D" id="3.60.21.10">
    <property type="match status" value="1"/>
</dbReference>
<dbReference type="InterPro" id="IPR004843">
    <property type="entry name" value="Calcineurin-like_PHP_ApaH"/>
</dbReference>
<dbReference type="InterPro" id="IPR029052">
    <property type="entry name" value="Metallo-depent_PP-like"/>
</dbReference>
<dbReference type="InterPro" id="IPR047129">
    <property type="entry name" value="PPA2-like"/>
</dbReference>
<dbReference type="InterPro" id="IPR006186">
    <property type="entry name" value="Ser/Thr-sp_prot-phosphatase"/>
</dbReference>
<dbReference type="PANTHER" id="PTHR45619">
    <property type="entry name" value="SERINE/THREONINE-PROTEIN PHOSPHATASE PP2A-RELATED"/>
    <property type="match status" value="1"/>
</dbReference>
<dbReference type="Pfam" id="PF00149">
    <property type="entry name" value="Metallophos"/>
    <property type="match status" value="1"/>
</dbReference>
<dbReference type="PRINTS" id="PR00114">
    <property type="entry name" value="STPHPHTASE"/>
</dbReference>
<dbReference type="SMART" id="SM00156">
    <property type="entry name" value="PP2Ac"/>
    <property type="match status" value="1"/>
</dbReference>
<dbReference type="SUPFAM" id="SSF56300">
    <property type="entry name" value="Metallo-dependent phosphatases"/>
    <property type="match status" value="1"/>
</dbReference>
<dbReference type="PROSITE" id="PS00125">
    <property type="entry name" value="SER_THR_PHOSPHATASE"/>
    <property type="match status" value="1"/>
</dbReference>
<gene>
    <name type="primary">PPP2CB</name>
</gene>
<sequence length="293" mass="33610">LNECKQLNENQVRTLCEKAKEILTKESNVQEVRCPVTVCGDVHGQFHDLMELFRIGGKSPDTNYLFMGDYVDRGYYSVETVTLLVALKVRYPERITILRGNHESRQITQVYGFYDECLRKYGNANVWKYFTDLFDYLPLTALVDGQIFCLHGGLSPSIDTLDHIRALDRLQEVPHEGPMCDLLWSDPDDRGGWGISPRGAGYTFGQDISETFNHANGLTLVSRAHQLVMEGYNWCHDRNVVTIFSAPNYCYRCGNQAAIMELDDTLKYSFLQFDPAPRRGEPHVTRRTPDYFL</sequence>
<comment type="function">
    <text evidence="2">Catalytic subunit of protein phosphatase 2A (PP2A), a serine/threonine phosphatase involved in the regulation of a wide variety of enzymes, signal transduction pathways, and cellular events. PP2A can modulate the activity of phosphorylase B kinase, casein kinase 2, mitogen-stimulated S6 kinase, and MAP-2 kinase. Part of the striatin-interacting phosphatase and kinase (STRIPAK) complexes. STRIPAK complexes have critical roles in protein (de)phosphorylation and are regulators of multiple signaling pathways including Hippo, MAPK, nuclear receptor and cytoskeleton remodeling. Different types of STRIPAK complexes are involved in a variety of biological processes such as cell growth, differentiation, apoptosis, metabolism and immune regulation.</text>
</comment>
<comment type="catalytic activity">
    <reaction evidence="2">
        <text>O-phospho-L-seryl-[protein] + H2O = L-seryl-[protein] + phosphate</text>
        <dbReference type="Rhea" id="RHEA:20629"/>
        <dbReference type="Rhea" id="RHEA-COMP:9863"/>
        <dbReference type="Rhea" id="RHEA-COMP:11604"/>
        <dbReference type="ChEBI" id="CHEBI:15377"/>
        <dbReference type="ChEBI" id="CHEBI:29999"/>
        <dbReference type="ChEBI" id="CHEBI:43474"/>
        <dbReference type="ChEBI" id="CHEBI:83421"/>
        <dbReference type="EC" id="3.1.3.16"/>
    </reaction>
    <physiologicalReaction direction="left-to-right" evidence="2">
        <dbReference type="Rhea" id="RHEA:20630"/>
    </physiologicalReaction>
</comment>
<comment type="catalytic activity">
    <reaction evidence="2">
        <text>O-phospho-L-threonyl-[protein] + H2O = L-threonyl-[protein] + phosphate</text>
        <dbReference type="Rhea" id="RHEA:47004"/>
        <dbReference type="Rhea" id="RHEA-COMP:11060"/>
        <dbReference type="Rhea" id="RHEA-COMP:11605"/>
        <dbReference type="ChEBI" id="CHEBI:15377"/>
        <dbReference type="ChEBI" id="CHEBI:30013"/>
        <dbReference type="ChEBI" id="CHEBI:43474"/>
        <dbReference type="ChEBI" id="CHEBI:61977"/>
        <dbReference type="EC" id="3.1.3.16"/>
    </reaction>
    <physiologicalReaction direction="left-to-right" evidence="2">
        <dbReference type="Rhea" id="RHEA:47005"/>
    </physiologicalReaction>
</comment>
<comment type="cofactor">
    <cofactor evidence="1">
        <name>Mn(2+)</name>
        <dbReference type="ChEBI" id="CHEBI:29035"/>
    </cofactor>
    <text evidence="1">Binds 2 manganese ions per subunit.</text>
</comment>
<comment type="subunit">
    <text evidence="2 4">Found in a complex with at least ARL2, PPP2CB, PPP2R1A, PPP2R2A, PPP2R5E and TBCD. Interacts with TBCD (By similarity). PP2A consists of a common heterodimeric core enzyme (composed of a 36 kDa catalytic subunit (subunit C) and a 65 kDa constant regulatory subunit (PR65) (subunit A)) that associates with a variety of regulatory subunits. Proteins that associate with the core dimer include three families of regulatory subunits B (the R2/B/PR55/B55, R3/B''/PR72/PR130/PR59 and R5/B'/B56 families), the 48 kDa variable regulatory subunit, viral proteins, and cell signaling molecules. Binds PPME1. May indirectly interact with SGO1, most probably through regulatory B56 subunits. Interacts with CTTNBP2NL. Interacts with PTPA (By similarity). Part of the core of STRIPAK complexes composed of PP2A catalytic and scaffolding subunits, the striatins (PP2A regulatory subunits), the striatin-associated proteins MOB4, STRIP1 and STRIP2, PDCD10 and members of the STE20 kinases, such as STK24 and STK26 (By similarity).</text>
</comment>
<comment type="subcellular location">
    <subcellularLocation>
        <location evidence="2">Cytoplasm</location>
    </subcellularLocation>
    <subcellularLocation>
        <location evidence="2">Nucleus</location>
    </subcellularLocation>
    <subcellularLocation>
        <location evidence="2">Chromosome</location>
        <location evidence="2">Centromere</location>
    </subcellularLocation>
    <subcellularLocation>
        <location evidence="2">Cytoplasm</location>
        <location evidence="2">Cytoskeleton</location>
        <location evidence="2">Spindle pole</location>
    </subcellularLocation>
    <text evidence="2">In prometaphase cells, but not in anaphase cells, localizes at centromeres. During mitosis, also found at spindle poles.</text>
</comment>
<comment type="PTM">
    <text evidence="1">Reversibly methyl esterified on Leu-293 by leucine carboxyl methyltransferase 1 (Lcmt1) and protein phosphatase methylesterase 1 (PPME1). Carboxyl methylation influences the affinity of the catalytic subunit for the different regulatory subunits, thereby modulating the PP2A holoenzyme's substrate specificity, enzyme activity and cellular localization (By similarity).</text>
</comment>
<comment type="PTM">
    <text evidence="1">Phosphorylation of either threonine (by autophosphorylation-activated protein kinase) or tyrosine results in inactivation of the phosphatase. Auto-dephosphorylation has been suggested as a mechanism for reactivation (By similarity).</text>
</comment>
<comment type="PTM">
    <text evidence="3">May be monoubiquitinated by NOSIP.</text>
</comment>
<comment type="similarity">
    <text evidence="5">Belongs to the PPP phosphatase family. PP-1 subfamily.</text>
</comment>
<proteinExistence type="evidence at transcript level"/>
<accession>P11493</accession>